<gene>
    <name evidence="1" type="primary">truA</name>
    <name type="ordered locus">RAF_ORF1215</name>
</gene>
<sequence>MYRYKITIEYLGTDLAGWQRQAGVMSVQQILEEAIYKFSGEQVILFGSGRTDAGVHAIGQVAHFDLSKYLEPHKIITAINYFARPYAVGVWNCELAPNNFHARFSATSRYYIYRIINRPYPSVIDLNRAWWISSPLDVPAMQQAAVYLLGKHDFTSFRASSCQSKSSIKTLTELNIIKEDEEIKLYLSAPSFLHHMVRNIVGSLVLVGKNIWQVEQIKDVLEAKDRKAAGPTAPASGLYFVKTAY</sequence>
<organism>
    <name type="scientific">Rickettsia africae (strain ESF-5)</name>
    <dbReference type="NCBI Taxonomy" id="347255"/>
    <lineage>
        <taxon>Bacteria</taxon>
        <taxon>Pseudomonadati</taxon>
        <taxon>Pseudomonadota</taxon>
        <taxon>Alphaproteobacteria</taxon>
        <taxon>Rickettsiales</taxon>
        <taxon>Rickettsiaceae</taxon>
        <taxon>Rickettsieae</taxon>
        <taxon>Rickettsia</taxon>
        <taxon>spotted fever group</taxon>
    </lineage>
</organism>
<comment type="function">
    <text evidence="1">Formation of pseudouridine at positions 38, 39 and 40 in the anticodon stem and loop of transfer RNAs.</text>
</comment>
<comment type="catalytic activity">
    <reaction evidence="1">
        <text>uridine(38/39/40) in tRNA = pseudouridine(38/39/40) in tRNA</text>
        <dbReference type="Rhea" id="RHEA:22376"/>
        <dbReference type="Rhea" id="RHEA-COMP:10085"/>
        <dbReference type="Rhea" id="RHEA-COMP:10087"/>
        <dbReference type="ChEBI" id="CHEBI:65314"/>
        <dbReference type="ChEBI" id="CHEBI:65315"/>
        <dbReference type="EC" id="5.4.99.12"/>
    </reaction>
</comment>
<comment type="subunit">
    <text evidence="1">Homodimer.</text>
</comment>
<comment type="similarity">
    <text evidence="1">Belongs to the tRNA pseudouridine synthase TruA family.</text>
</comment>
<name>TRUA_RICAE</name>
<keyword id="KW-0413">Isomerase</keyword>
<keyword id="KW-0819">tRNA processing</keyword>
<reference key="1">
    <citation type="journal article" date="2009" name="BMC Genomics">
        <title>Analysis of the Rickettsia africae genome reveals that virulence acquisition in Rickettsia species may be explained by genome reduction.</title>
        <authorList>
            <person name="Fournier P.-E."/>
            <person name="El Karkouri K."/>
            <person name="Leroy Q."/>
            <person name="Robert C."/>
            <person name="Giumelli B."/>
            <person name="Renesto P."/>
            <person name="Socolovschi C."/>
            <person name="Parola P."/>
            <person name="Audic S."/>
            <person name="Raoult D."/>
        </authorList>
    </citation>
    <scope>NUCLEOTIDE SEQUENCE [LARGE SCALE GENOMIC DNA]</scope>
    <source>
        <strain>ESF-5</strain>
    </source>
</reference>
<evidence type="ECO:0000255" key="1">
    <source>
        <dbReference type="HAMAP-Rule" id="MF_00171"/>
    </source>
</evidence>
<proteinExistence type="inferred from homology"/>
<dbReference type="EC" id="5.4.99.12" evidence="1"/>
<dbReference type="EMBL" id="CP001612">
    <property type="protein sequence ID" value="ACP53983.1"/>
    <property type="molecule type" value="Genomic_DNA"/>
</dbReference>
<dbReference type="RefSeq" id="WP_012720099.1">
    <property type="nucleotide sequence ID" value="NC_012633.1"/>
</dbReference>
<dbReference type="SMR" id="C3PLZ3"/>
<dbReference type="KEGG" id="raf:RAF_ORF1215"/>
<dbReference type="HOGENOM" id="CLU_014673_0_2_5"/>
<dbReference type="Proteomes" id="UP000002305">
    <property type="component" value="Chromosome"/>
</dbReference>
<dbReference type="GO" id="GO:0003723">
    <property type="term" value="F:RNA binding"/>
    <property type="evidence" value="ECO:0007669"/>
    <property type="project" value="InterPro"/>
</dbReference>
<dbReference type="GO" id="GO:0160147">
    <property type="term" value="F:tRNA pseudouridine(38-40) synthase activity"/>
    <property type="evidence" value="ECO:0007669"/>
    <property type="project" value="UniProtKB-EC"/>
</dbReference>
<dbReference type="GO" id="GO:0031119">
    <property type="term" value="P:tRNA pseudouridine synthesis"/>
    <property type="evidence" value="ECO:0007669"/>
    <property type="project" value="UniProtKB-UniRule"/>
</dbReference>
<dbReference type="CDD" id="cd02570">
    <property type="entry name" value="PseudoU_synth_EcTruA"/>
    <property type="match status" value="1"/>
</dbReference>
<dbReference type="FunFam" id="3.30.70.580:FF:000001">
    <property type="entry name" value="tRNA pseudouridine synthase A"/>
    <property type="match status" value="1"/>
</dbReference>
<dbReference type="Gene3D" id="3.30.70.660">
    <property type="entry name" value="Pseudouridine synthase I, catalytic domain, C-terminal subdomain"/>
    <property type="match status" value="1"/>
</dbReference>
<dbReference type="Gene3D" id="3.30.70.580">
    <property type="entry name" value="Pseudouridine synthase I, catalytic domain, N-terminal subdomain"/>
    <property type="match status" value="1"/>
</dbReference>
<dbReference type="HAMAP" id="MF_00171">
    <property type="entry name" value="TruA"/>
    <property type="match status" value="1"/>
</dbReference>
<dbReference type="InterPro" id="IPR020103">
    <property type="entry name" value="PsdUridine_synth_cat_dom_sf"/>
</dbReference>
<dbReference type="InterPro" id="IPR001406">
    <property type="entry name" value="PsdUridine_synth_TruA"/>
</dbReference>
<dbReference type="InterPro" id="IPR020097">
    <property type="entry name" value="PsdUridine_synth_TruA_a/b_dom"/>
</dbReference>
<dbReference type="InterPro" id="IPR020095">
    <property type="entry name" value="PsdUridine_synth_TruA_C"/>
</dbReference>
<dbReference type="InterPro" id="IPR020094">
    <property type="entry name" value="TruA/RsuA/RluB/E/F_N"/>
</dbReference>
<dbReference type="NCBIfam" id="TIGR00071">
    <property type="entry name" value="hisT_truA"/>
    <property type="match status" value="1"/>
</dbReference>
<dbReference type="PANTHER" id="PTHR11142">
    <property type="entry name" value="PSEUDOURIDYLATE SYNTHASE"/>
    <property type="match status" value="1"/>
</dbReference>
<dbReference type="PANTHER" id="PTHR11142:SF0">
    <property type="entry name" value="TRNA PSEUDOURIDINE SYNTHASE-LIKE 1"/>
    <property type="match status" value="1"/>
</dbReference>
<dbReference type="Pfam" id="PF01416">
    <property type="entry name" value="PseudoU_synth_1"/>
    <property type="match status" value="2"/>
</dbReference>
<dbReference type="PIRSF" id="PIRSF001430">
    <property type="entry name" value="tRNA_psdUrid_synth"/>
    <property type="match status" value="1"/>
</dbReference>
<dbReference type="SUPFAM" id="SSF55120">
    <property type="entry name" value="Pseudouridine synthase"/>
    <property type="match status" value="1"/>
</dbReference>
<feature type="chain" id="PRO_1000203698" description="tRNA pseudouridine synthase A">
    <location>
        <begin position="1"/>
        <end position="245"/>
    </location>
</feature>
<feature type="active site" description="Nucleophile" evidence="1">
    <location>
        <position position="52"/>
    </location>
</feature>
<feature type="binding site" evidence="1">
    <location>
        <position position="111"/>
    </location>
    <ligand>
        <name>substrate</name>
    </ligand>
</feature>
<accession>C3PLZ3</accession>
<protein>
    <recommendedName>
        <fullName evidence="1">tRNA pseudouridine synthase A</fullName>
        <ecNumber evidence="1">5.4.99.12</ecNumber>
    </recommendedName>
    <alternativeName>
        <fullName evidence="1">tRNA pseudouridine(38-40) synthase</fullName>
    </alternativeName>
    <alternativeName>
        <fullName evidence="1">tRNA pseudouridylate synthase I</fullName>
    </alternativeName>
    <alternativeName>
        <fullName evidence="1">tRNA-uridine isomerase I</fullName>
    </alternativeName>
</protein>